<accession>B5R9Z8</accession>
<sequence length="353" mass="39297">MSEPLKPRIDFAEPLKEEPTSAFKAQQTFSEAESRTFAPAAIDERPEDEGVAEAAVDAALRPKRSLWRKMVMGGLALFGASVVGQGVQWTMNAWQTQDWVALGGCAAGALIIGAGVGSVVTEWRRLWRLRQRAHERDEARELLHSHSVGKGRAFCEKLAQQAGIDQSHPALQRWYAAIHETQNDREIVGLYAHLVQLVLDAQARREISRFAAESTLMIAVSSLALVDMAFIAWRNLRLINRIATLYGIELGYYSRLRLFRLVLLNIAFAGASELVREVGMDWMSQDLAARLSTRAAQGIGAGLLTARLGIKAMELCRPLPWIDNDKPRLGDFRRQLIGQLKETLQKSKSSPEK</sequence>
<gene>
    <name evidence="1" type="primary">ycjF</name>
    <name type="ordered locus">SG1432</name>
</gene>
<feature type="chain" id="PRO_1000136896" description="UPF0283 membrane protein YcjF">
    <location>
        <begin position="1"/>
        <end position="353"/>
    </location>
</feature>
<feature type="transmembrane region" description="Helical" evidence="1">
    <location>
        <begin position="70"/>
        <end position="90"/>
    </location>
</feature>
<feature type="transmembrane region" description="Helical" evidence="1">
    <location>
        <begin position="100"/>
        <end position="120"/>
    </location>
</feature>
<feature type="transmembrane region" description="Helical" evidence="1">
    <location>
        <begin position="213"/>
        <end position="233"/>
    </location>
</feature>
<feature type="region of interest" description="Disordered" evidence="2">
    <location>
        <begin position="1"/>
        <end position="35"/>
    </location>
</feature>
<feature type="compositionally biased region" description="Basic and acidic residues" evidence="2">
    <location>
        <begin position="1"/>
        <end position="19"/>
    </location>
</feature>
<comment type="subcellular location">
    <subcellularLocation>
        <location evidence="1">Cell inner membrane</location>
        <topology evidence="1">Multi-pass membrane protein</topology>
    </subcellularLocation>
</comment>
<comment type="similarity">
    <text evidence="1">Belongs to the UPF0283 family.</text>
</comment>
<keyword id="KW-0997">Cell inner membrane</keyword>
<keyword id="KW-1003">Cell membrane</keyword>
<keyword id="KW-0472">Membrane</keyword>
<keyword id="KW-0812">Transmembrane</keyword>
<keyword id="KW-1133">Transmembrane helix</keyword>
<reference key="1">
    <citation type="journal article" date="2008" name="Genome Res.">
        <title>Comparative genome analysis of Salmonella enteritidis PT4 and Salmonella gallinarum 287/91 provides insights into evolutionary and host adaptation pathways.</title>
        <authorList>
            <person name="Thomson N.R."/>
            <person name="Clayton D.J."/>
            <person name="Windhorst D."/>
            <person name="Vernikos G."/>
            <person name="Davidson S."/>
            <person name="Churcher C."/>
            <person name="Quail M.A."/>
            <person name="Stevens M."/>
            <person name="Jones M.A."/>
            <person name="Watson M."/>
            <person name="Barron A."/>
            <person name="Layton A."/>
            <person name="Pickard D."/>
            <person name="Kingsley R.A."/>
            <person name="Bignell A."/>
            <person name="Clark L."/>
            <person name="Harris B."/>
            <person name="Ormond D."/>
            <person name="Abdellah Z."/>
            <person name="Brooks K."/>
            <person name="Cherevach I."/>
            <person name="Chillingworth T."/>
            <person name="Woodward J."/>
            <person name="Norberczak H."/>
            <person name="Lord A."/>
            <person name="Arrowsmith C."/>
            <person name="Jagels K."/>
            <person name="Moule S."/>
            <person name="Mungall K."/>
            <person name="Saunders M."/>
            <person name="Whitehead S."/>
            <person name="Chabalgoity J.A."/>
            <person name="Maskell D."/>
            <person name="Humphreys T."/>
            <person name="Roberts M."/>
            <person name="Barrow P.A."/>
            <person name="Dougan G."/>
            <person name="Parkhill J."/>
        </authorList>
    </citation>
    <scope>NUCLEOTIDE SEQUENCE [LARGE SCALE GENOMIC DNA]</scope>
    <source>
        <strain>287/91 / NCTC 13346</strain>
    </source>
</reference>
<proteinExistence type="inferred from homology"/>
<organism>
    <name type="scientific">Salmonella gallinarum (strain 287/91 / NCTC 13346)</name>
    <dbReference type="NCBI Taxonomy" id="550538"/>
    <lineage>
        <taxon>Bacteria</taxon>
        <taxon>Pseudomonadati</taxon>
        <taxon>Pseudomonadota</taxon>
        <taxon>Gammaproteobacteria</taxon>
        <taxon>Enterobacterales</taxon>
        <taxon>Enterobacteriaceae</taxon>
        <taxon>Salmonella</taxon>
    </lineage>
</organism>
<dbReference type="EMBL" id="AM933173">
    <property type="protein sequence ID" value="CAR37302.1"/>
    <property type="molecule type" value="Genomic_DNA"/>
</dbReference>
<dbReference type="RefSeq" id="WP_001294462.1">
    <property type="nucleotide sequence ID" value="NC_011274.1"/>
</dbReference>
<dbReference type="SMR" id="B5R9Z8"/>
<dbReference type="KEGG" id="seg:SG1432"/>
<dbReference type="HOGENOM" id="CLU_057693_2_0_6"/>
<dbReference type="Proteomes" id="UP000008321">
    <property type="component" value="Chromosome"/>
</dbReference>
<dbReference type="GO" id="GO:0005886">
    <property type="term" value="C:plasma membrane"/>
    <property type="evidence" value="ECO:0007669"/>
    <property type="project" value="UniProtKB-SubCell"/>
</dbReference>
<dbReference type="HAMAP" id="MF_01085">
    <property type="entry name" value="UPF0283"/>
    <property type="match status" value="1"/>
</dbReference>
<dbReference type="InterPro" id="IPR021147">
    <property type="entry name" value="DUF697"/>
</dbReference>
<dbReference type="InterPro" id="IPR006507">
    <property type="entry name" value="UPF0283"/>
</dbReference>
<dbReference type="NCBIfam" id="TIGR01620">
    <property type="entry name" value="hyp_HI0043"/>
    <property type="match status" value="1"/>
</dbReference>
<dbReference type="PANTHER" id="PTHR39342">
    <property type="entry name" value="UPF0283 MEMBRANE PROTEIN YCJF"/>
    <property type="match status" value="1"/>
</dbReference>
<dbReference type="PANTHER" id="PTHR39342:SF1">
    <property type="entry name" value="UPF0283 MEMBRANE PROTEIN YCJF"/>
    <property type="match status" value="1"/>
</dbReference>
<dbReference type="Pfam" id="PF05128">
    <property type="entry name" value="DUF697"/>
    <property type="match status" value="1"/>
</dbReference>
<name>YCJF_SALG2</name>
<evidence type="ECO:0000255" key="1">
    <source>
        <dbReference type="HAMAP-Rule" id="MF_01085"/>
    </source>
</evidence>
<evidence type="ECO:0000256" key="2">
    <source>
        <dbReference type="SAM" id="MobiDB-lite"/>
    </source>
</evidence>
<protein>
    <recommendedName>
        <fullName evidence="1">UPF0283 membrane protein YcjF</fullName>
    </recommendedName>
</protein>